<comment type="function">
    <text evidence="3">Cytosolic enzyme that catalyzes the carboxylation of acetyl-CoA to malonyl-CoA, the first and rate-limiting step of de novo fatty acid biosynthesis. This is a 2 steps reaction starting with the ATP-dependent carboxylation of the biotin carried by the biotin carboxyl carrier (BCC) domain followed by the transfer of the carboxyl group from carboxylated biotin to acetyl-CoA.</text>
</comment>
<comment type="catalytic activity">
    <reaction evidence="3">
        <text>hydrogencarbonate + acetyl-CoA + ATP = malonyl-CoA + ADP + phosphate + H(+)</text>
        <dbReference type="Rhea" id="RHEA:11308"/>
        <dbReference type="ChEBI" id="CHEBI:15378"/>
        <dbReference type="ChEBI" id="CHEBI:17544"/>
        <dbReference type="ChEBI" id="CHEBI:30616"/>
        <dbReference type="ChEBI" id="CHEBI:43474"/>
        <dbReference type="ChEBI" id="CHEBI:57288"/>
        <dbReference type="ChEBI" id="CHEBI:57384"/>
        <dbReference type="ChEBI" id="CHEBI:456216"/>
        <dbReference type="EC" id="6.4.1.2"/>
    </reaction>
    <physiologicalReaction direction="left-to-right" evidence="3">
        <dbReference type="Rhea" id="RHEA:11309"/>
    </physiologicalReaction>
</comment>
<comment type="cofactor">
    <cofactor evidence="5 6">
        <name>Mg(2+)</name>
        <dbReference type="ChEBI" id="CHEBI:18420"/>
    </cofactor>
    <cofactor evidence="5 6">
        <name>Mn(2+)</name>
        <dbReference type="ChEBI" id="CHEBI:29035"/>
    </cofactor>
    <text evidence="5 6">Binds 2 magnesium or manganese ions per subunit.</text>
</comment>
<comment type="cofactor">
    <cofactor evidence="3 7">
        <name>biotin</name>
        <dbReference type="ChEBI" id="CHEBI:57586"/>
    </cofactor>
</comment>
<comment type="activity regulation">
    <text evidence="3">Inhibited by phosphorylation (By similarity). Citrate promotes oligomerization of the protein into filaments that correspond to the most active form of the carboxylase (By similarity).</text>
</comment>
<comment type="pathway">
    <text evidence="3">Lipid metabolism; malonyl-CoA biosynthesis; malonyl-CoA from acetyl-CoA: step 1/1.</text>
</comment>
<comment type="subunit">
    <text evidence="3">Monomer, homodimer, and homotetramer. Can form filamentous polymers. Interacts in its inactive phosphorylated form with the BRCT domains of BRCA1 which prevents ACACA dephosphorylation and inhibits lipid synthesis. Interacts with MID1IP1; interaction with MID1IP1 promotes oligomerization and increases its activity.</text>
</comment>
<comment type="subcellular location">
    <subcellularLocation>
        <location evidence="4">Cytoplasm</location>
        <location evidence="4">Cytosol</location>
    </subcellularLocation>
</comment>
<comment type="domain">
    <text evidence="3">Consists of an N-terminal biotin carboxylation/carboxylase (BC) domain that catalyzes the ATP-dependent transient carboxylation of the biotin covalently attached to the central biotinyl-binding/biotin carboxyl carrier (BCC) domain. The C-terminal carboxyl transferase (CT) domain catalyzes the transfer of the carboxyl group from carboxylated biotin to acetyl-CoA to produce malonyl-CoA.</text>
</comment>
<comment type="PTM">
    <text evidence="3">Phosphorylation on Ser-1263 is required for interaction with BRCA1.</text>
</comment>
<comment type="PTM">
    <text evidence="2">Phosphorylation at Ser-80 by AMPK inactivates enzyme activity.</text>
</comment>
<comment type="PTM">
    <text evidence="3">The biotin cofactor is covalently attached to the central biotinyl-binding domain and is required for the catalytic activity.</text>
</comment>
<sequence>MDEPSSLAKPLELNQHSRFIIGSVSEDNSEDEISNLVKLDLLEEKEGSLSPASVSSDTLSDLGISSLQDGLALHMRSSMSGLHLVKQGRDRKKIDSQRDFTVASPAEFVTRFGGNKVIEKVLIANNGIAAVKCMRSIRRWSYEMFRNERAIRFVVMVTPEDLKANAEYIKMADHYVPVPGGPNNNNYANVELILDIAKRIPVQAVWAGWGHASENPKLPELLLKNGIAFMGPPSQAMWALGDKIASSIVAQTAGIPTLPWSGSGLCVDWHENDFSKRILNVPQELYEKGYVKDVDDGLKAAEEVGYPVMIKASEGGGGKGIRKVNNADDFPNLFRQVQAEVPGSPIFVMRLAKQSRHLEVQILADQYGNAISLFGRDCSVQRRHQKIIEEAPAAIATPAVFEHMEQCAVKLARMVGYVSAGTVEYLYSQDGSFYFLELNPRLQVEHPCTEMVADVNLPAAQLQIAMGIPLYRIKDIRMMYGVSPWGDAPIDFENSAHVPCPRGHVIAARITSENPDEGFKPSSGTVQELNFRSNKNVWGYFSVAAAGGLHEFADSQFGHCFSWGENREEAISNMVVALKELSIRGDFRTTVEYLIKLLETESFQLNRIGTGWLDRLIAEKVQAERPDTMLGVVCGALHVADVSLRNSISNFLHSLERGQVLTAHTLLNTVDVELIYEGVKYVLKVTRQSPNSYVVIMNGSCVEVDVHRLSDGGLLLSYDVSSYTTYMKEEVDRYRITIGNKTCVFEKENDPSVLRSPSAGKLIQYIVEDGGHVFAGQCYAEIEVMKMVMTLTAAESGCIHYVKRPGAALDPGCVIAKMQLDNPSKVQQAELHTGSLPRIQSTALRGEKLHRVFHYVLDNLVNVMNGYCLPDPFFSSRVKDWVERLMKTLRDPSLPLLELQDIMTSVSGRIPPNVEKSIKKEMAQYASNITSVLCQFPSQQIANILDSHAATLNRKSEREVFFMNTQSIVQLVQRYRSGIRGHMKAVVMDLLRQYLRVETQFQNGHYDKCVFALREENKSDMNTVLNYIFSHAQVTRKNLLVTMLIDQLCGRGPTLTDELLNILTELTQLSKTTNAKVALRARQVLIASHLPSYELRLNQVESIFLSAIDMYGHQFCIENLQKLILSETSIFDVLPNFFYHSNQVVRMAALEVYVRRAYIAYELNSVQHRQLKDNTCVVEFQFMLPTSHPNRGNIPTLNRMSFSSNLNHYGMTHVASVSDVLLDNAFTPPCQRMGGMVSFRTFEDFVRIFDEVMGCFCDSPPQSPTFPEAGHTSLYDEDKVPRDEPIHILNVAIKTDCDIEDDSLAAMFREFTQQNKATLVEHGIRRLTFLVAQKDFRKQVNYEVDQRFHREFPKFFTFRARDKFEEDRIYRHLEPALAFQLELNRMRNFDLTAIPCANHKMHLYLGAAKVEVGTEVTDYRFFVRAIIRHSDLVTKEASFEYLQNEGERLLLEAMDELEVAFNNTNVRTDCNHIFLNFVPTVIMDPSKIEESVRSMVMRYGSRLWKLRVLQAELKINIRLTPTGKAIPIRLFLTNESGYYLDISLYKEVTDSRTAQIMFQAYGDKQGPLHGMLINTPYVTKDQLQSKRFQAQSLGTTYIYDIPEMFRQSLIKLWESMSSQAFLPPPPLPSDILTYTELVLDDQGQLVHMNRLPGGNEIGMVAWKMTLKSPEYPDGRDIIVIGNDITYRIGSFGPQEDLLFLRASELARAEGIPRIYVAANSGARIGLAEEIRHMFHVAWVDPEDPYKGYKYLYLTPQDYKRVSALNSVHCEHVEDEGESRYKITDIIGKEEGLGAENLRGSGMIAGESSLAYDEIITISLVTCRAIGIGAYLVRLGQRTIQVENSHLILTGAGALNKVLGREVYTSNNQLGGIQIMHNNGVTHSTVCDDFEGVFTVLHWLSYMPKSVYSSVPLLNSKDPIDRVIEFVPTKAPYDPRWMLAGRPHPTQKGQWLSGFFDYGSFSEIMQPWAQTVVVGRARLGGIPVGVVAVETRTVELSIPADPANLDSEAKIIQQAGQVWFPDSAFKTYQAIKDFNREGLPLMVFANWRGFSGGMKDMYDQVLKFGAYIVDGLRECSQPVMVYIPPQAELRGGSWVVIDPTINPRHMEMYADRESRGSVLEPEGTVEIKFRRKDLVKTMRRVDPVYIHLAERLGTPELSVAERKELESKLKEREEFLLPIYHQVAVQFADLHDTPGRMQEKGVINDILDWKTSRTFFYWRLRRLLLEDLVKKKIHNANPELTDGQIQAMLRRWFVEVEGTVKAYVWDNNKDLVEWLEKQLTEEDGVRSVIEENIKYISRDYVLKQIRSLVQANPEVAMDSIVHMTQHISPTQRAEVVRILSTMDSPST</sequence>
<accession>Q9TTS3</accession>
<keyword id="KW-0007">Acetylation</keyword>
<keyword id="KW-0021">Allosteric enzyme</keyword>
<keyword id="KW-0067">ATP-binding</keyword>
<keyword id="KW-0092">Biotin</keyword>
<keyword id="KW-0963">Cytoplasm</keyword>
<keyword id="KW-0275">Fatty acid biosynthesis</keyword>
<keyword id="KW-0276">Fatty acid metabolism</keyword>
<keyword id="KW-0436">Ligase</keyword>
<keyword id="KW-0444">Lipid biosynthesis</keyword>
<keyword id="KW-0443">Lipid metabolism</keyword>
<keyword id="KW-0460">Magnesium</keyword>
<keyword id="KW-0464">Manganese</keyword>
<keyword id="KW-0479">Metal-binding</keyword>
<keyword id="KW-0511">Multifunctional enzyme</keyword>
<keyword id="KW-0547">Nucleotide-binding</keyword>
<keyword id="KW-0597">Phosphoprotein</keyword>
<keyword id="KW-1185">Reference proteome</keyword>
<gene>
    <name evidence="3" type="primary">ACACA</name>
    <name type="synonym">ACAC</name>
    <name type="synonym">ACCA</name>
</gene>
<evidence type="ECO:0000250" key="1"/>
<evidence type="ECO:0000250" key="2">
    <source>
        <dbReference type="UniProtKB" id="P11497"/>
    </source>
</evidence>
<evidence type="ECO:0000250" key="3">
    <source>
        <dbReference type="UniProtKB" id="Q13085"/>
    </source>
</evidence>
<evidence type="ECO:0000250" key="4">
    <source>
        <dbReference type="UniProtKB" id="Q5SWU9"/>
    </source>
</evidence>
<evidence type="ECO:0000255" key="5">
    <source>
        <dbReference type="PROSITE-ProRule" id="PRU00409"/>
    </source>
</evidence>
<evidence type="ECO:0000255" key="6">
    <source>
        <dbReference type="PROSITE-ProRule" id="PRU00969"/>
    </source>
</evidence>
<evidence type="ECO:0000255" key="7">
    <source>
        <dbReference type="PROSITE-ProRule" id="PRU01066"/>
    </source>
</evidence>
<evidence type="ECO:0000255" key="8">
    <source>
        <dbReference type="PROSITE-ProRule" id="PRU01136"/>
    </source>
</evidence>
<evidence type="ECO:0000255" key="9">
    <source>
        <dbReference type="PROSITE-ProRule" id="PRU01137"/>
    </source>
</evidence>
<evidence type="ECO:0000255" key="10">
    <source>
        <dbReference type="PROSITE-ProRule" id="PRU01138"/>
    </source>
</evidence>
<feature type="chain" id="PRO_0000146763" description="Acetyl-CoA carboxylase 1">
    <location>
        <begin position="1"/>
        <end position="2346"/>
    </location>
</feature>
<feature type="domain" description="Biotin carboxylation" evidence="6">
    <location>
        <begin position="117"/>
        <end position="618"/>
    </location>
</feature>
<feature type="domain" description="ATP-grasp" evidence="5">
    <location>
        <begin position="275"/>
        <end position="466"/>
    </location>
</feature>
<feature type="domain" description="Biotinyl-binding" evidence="7">
    <location>
        <begin position="745"/>
        <end position="819"/>
    </location>
</feature>
<feature type="domain" description="CoA carboxyltransferase N-terminal" evidence="8">
    <location>
        <begin position="1576"/>
        <end position="1914"/>
    </location>
</feature>
<feature type="domain" description="CoA carboxyltransferase C-terminal" evidence="9">
    <location>
        <begin position="1918"/>
        <end position="2234"/>
    </location>
</feature>
<feature type="region of interest" description="Carboxyltransferase" evidence="10">
    <location>
        <begin position="1576"/>
        <end position="2234"/>
    </location>
</feature>
<feature type="active site" evidence="1">
    <location>
        <position position="441"/>
    </location>
</feature>
<feature type="binding site" evidence="5">
    <location>
        <begin position="315"/>
        <end position="320"/>
    </location>
    <ligand>
        <name>ATP</name>
        <dbReference type="ChEBI" id="CHEBI:30616"/>
    </ligand>
</feature>
<feature type="binding site" evidence="5 6">
    <location>
        <position position="424"/>
    </location>
    <ligand>
        <name>Mg(2+)</name>
        <dbReference type="ChEBI" id="CHEBI:18420"/>
        <label>1</label>
    </ligand>
</feature>
<feature type="binding site" evidence="5 6">
    <location>
        <position position="424"/>
    </location>
    <ligand>
        <name>Mn(2+)</name>
        <dbReference type="ChEBI" id="CHEBI:29035"/>
        <label>1</label>
    </ligand>
</feature>
<feature type="binding site" evidence="5 6">
    <location>
        <position position="437"/>
    </location>
    <ligand>
        <name>Mg(2+)</name>
        <dbReference type="ChEBI" id="CHEBI:18420"/>
        <label>1</label>
    </ligand>
</feature>
<feature type="binding site" evidence="5 6">
    <location>
        <position position="437"/>
    </location>
    <ligand>
        <name>Mg(2+)</name>
        <dbReference type="ChEBI" id="CHEBI:18420"/>
        <label>2</label>
    </ligand>
</feature>
<feature type="binding site" evidence="5 6">
    <location>
        <position position="437"/>
    </location>
    <ligand>
        <name>Mn(2+)</name>
        <dbReference type="ChEBI" id="CHEBI:29035"/>
        <label>1</label>
    </ligand>
</feature>
<feature type="binding site" evidence="5 6">
    <location>
        <position position="437"/>
    </location>
    <ligand>
        <name>Mn(2+)</name>
        <dbReference type="ChEBI" id="CHEBI:29035"/>
        <label>2</label>
    </ligand>
</feature>
<feature type="binding site" evidence="5 6">
    <location>
        <position position="439"/>
    </location>
    <ligand>
        <name>Mg(2+)</name>
        <dbReference type="ChEBI" id="CHEBI:18420"/>
        <label>2</label>
    </ligand>
</feature>
<feature type="binding site" evidence="5 6">
    <location>
        <position position="439"/>
    </location>
    <ligand>
        <name>Mn(2+)</name>
        <dbReference type="ChEBI" id="CHEBI:29035"/>
        <label>2</label>
    </ligand>
</feature>
<feature type="binding site" evidence="1">
    <location>
        <position position="1823"/>
    </location>
    <ligand>
        <name>CoA</name>
        <dbReference type="ChEBI" id="CHEBI:57287"/>
    </ligand>
</feature>
<feature type="binding site" evidence="1">
    <location>
        <position position="2127"/>
    </location>
    <ligand>
        <name>CoA</name>
        <dbReference type="ChEBI" id="CHEBI:57287"/>
    </ligand>
</feature>
<feature type="binding site" evidence="1">
    <location>
        <position position="2129"/>
    </location>
    <ligand>
        <name>CoA</name>
        <dbReference type="ChEBI" id="CHEBI:57287"/>
    </ligand>
</feature>
<feature type="modified residue" description="N-acetylmethionine" evidence="3">
    <location>
        <position position="1"/>
    </location>
</feature>
<feature type="modified residue" description="Phosphoserine" evidence="3">
    <location>
        <position position="5"/>
    </location>
</feature>
<feature type="modified residue" description="Phosphoserine" evidence="3">
    <location>
        <position position="23"/>
    </location>
</feature>
<feature type="modified residue" description="Phosphoserine" evidence="3">
    <location>
        <position position="25"/>
    </location>
</feature>
<feature type="modified residue" description="Phosphoserine" evidence="3">
    <location>
        <position position="29"/>
    </location>
</feature>
<feature type="modified residue" description="Phosphoserine" evidence="2">
    <location>
        <position position="34"/>
    </location>
</feature>
<feature type="modified residue" description="Phosphoserine" evidence="3">
    <location>
        <position position="48"/>
    </location>
</feature>
<feature type="modified residue" description="Phosphoserine" evidence="2">
    <location>
        <position position="50"/>
    </location>
</feature>
<feature type="modified residue" description="Phosphoserine" evidence="3">
    <location>
        <position position="53"/>
    </location>
</feature>
<feature type="modified residue" description="Phosphothreonine" evidence="4">
    <location>
        <position position="58"/>
    </location>
</feature>
<feature type="modified residue" description="Phosphoserine" evidence="2">
    <location>
        <position position="78"/>
    </location>
</feature>
<feature type="modified residue" description="Phosphoserine; by AMPK" evidence="4">
    <location>
        <position position="80"/>
    </location>
</feature>
<feature type="modified residue" description="Phosphothreonine" evidence="3">
    <location>
        <position position="610"/>
    </location>
</feature>
<feature type="modified residue" description="N6-biotinyllysine" evidence="2 7">
    <location>
        <position position="786"/>
    </location>
</feature>
<feature type="modified residue" description="Phosphoserine" evidence="3">
    <location>
        <position position="835"/>
    </location>
</feature>
<feature type="modified residue" description="Phosphoserine" evidence="2">
    <location>
        <position position="1201"/>
    </location>
</feature>
<feature type="modified residue" description="Phosphoserine" evidence="2">
    <location>
        <position position="1216"/>
    </location>
</feature>
<feature type="modified residue" description="Phosphoserine" evidence="4">
    <location>
        <position position="1218"/>
    </location>
</feature>
<feature type="modified residue" description="Phosphothreonine" evidence="4">
    <location>
        <position position="1227"/>
    </location>
</feature>
<feature type="modified residue" description="Phosphoserine" evidence="4">
    <location>
        <position position="1259"/>
    </location>
</feature>
<feature type="modified residue" description="Phosphoserine" evidence="3">
    <location>
        <position position="1263"/>
    </location>
</feature>
<feature type="modified residue" description="Phosphoserine" evidence="3">
    <location>
        <position position="1273"/>
    </location>
</feature>
<feature type="modified residue" description="N6-acetyllysine" evidence="3">
    <location>
        <position position="1334"/>
    </location>
</feature>
<feature type="modified residue" description="Phosphothreonine" evidence="3">
    <location>
        <position position="2153"/>
    </location>
</feature>
<protein>
    <recommendedName>
        <fullName evidence="3">Acetyl-CoA carboxylase 1</fullName>
        <shortName>ACC1</shortName>
        <ecNumber evidence="3">6.4.1.2</ecNumber>
    </recommendedName>
    <alternativeName>
        <fullName>ACC-alpha</fullName>
    </alternativeName>
</protein>
<reference key="1">
    <citation type="journal article" date="2001" name="Biochem. J.">
        <title>Genomic distribution of three promoters of the bovine gene encoding acetyl-CoA carboxylase alpha and evidence that the nutritionally regulated promoter I contains a repressive element different from that in rat.</title>
        <authorList>
            <person name="Mao J."/>
            <person name="Marcos S."/>
            <person name="Davis S.K."/>
            <person name="Burzlaff J."/>
            <person name="Seyfert H.-M."/>
        </authorList>
    </citation>
    <scope>NUCLEOTIDE SEQUENCE [MRNA]</scope>
    <source>
        <tissue>Liver</tissue>
    </source>
</reference>
<name>ACACA_BOVIN</name>
<dbReference type="EC" id="6.4.1.2" evidence="3"/>
<dbReference type="EMBL" id="AJ132890">
    <property type="protein sequence ID" value="CAB56826.1"/>
    <property type="molecule type" value="mRNA"/>
</dbReference>
<dbReference type="RefSeq" id="NP_776649.1">
    <property type="nucleotide sequence ID" value="NM_174224.2"/>
</dbReference>
<dbReference type="SMR" id="Q9TTS3"/>
<dbReference type="FunCoup" id="Q9TTS3">
    <property type="interactions" value="1627"/>
</dbReference>
<dbReference type="STRING" id="9913.ENSBTAP00000074493"/>
<dbReference type="PaxDb" id="9913-ENSBTAP00000023364"/>
<dbReference type="PeptideAtlas" id="Q9TTS3"/>
<dbReference type="GeneID" id="281590"/>
<dbReference type="KEGG" id="bta:281590"/>
<dbReference type="CTD" id="31"/>
<dbReference type="eggNOG" id="KOG0368">
    <property type="taxonomic scope" value="Eukaryota"/>
</dbReference>
<dbReference type="InParanoid" id="Q9TTS3"/>
<dbReference type="OrthoDB" id="14612at2759"/>
<dbReference type="UniPathway" id="UPA00655">
    <property type="reaction ID" value="UER00711"/>
</dbReference>
<dbReference type="Proteomes" id="UP000009136">
    <property type="component" value="Unplaced"/>
</dbReference>
<dbReference type="GO" id="GO:0005829">
    <property type="term" value="C:cytosol"/>
    <property type="evidence" value="ECO:0000250"/>
    <property type="project" value="UniProtKB"/>
</dbReference>
<dbReference type="GO" id="GO:0005739">
    <property type="term" value="C:mitochondrion"/>
    <property type="evidence" value="ECO:0000318"/>
    <property type="project" value="GO_Central"/>
</dbReference>
<dbReference type="GO" id="GO:0003989">
    <property type="term" value="F:acetyl-CoA carboxylase activity"/>
    <property type="evidence" value="ECO:0000250"/>
    <property type="project" value="UniProtKB"/>
</dbReference>
<dbReference type="GO" id="GO:0005524">
    <property type="term" value="F:ATP binding"/>
    <property type="evidence" value="ECO:0007669"/>
    <property type="project" value="UniProtKB-KW"/>
</dbReference>
<dbReference type="GO" id="GO:0046872">
    <property type="term" value="F:metal ion binding"/>
    <property type="evidence" value="ECO:0007669"/>
    <property type="project" value="UniProtKB-KW"/>
</dbReference>
<dbReference type="GO" id="GO:0006084">
    <property type="term" value="P:acetyl-CoA metabolic process"/>
    <property type="evidence" value="ECO:0000250"/>
    <property type="project" value="UniProtKB"/>
</dbReference>
<dbReference type="GO" id="GO:0006633">
    <property type="term" value="P:fatty acid biosynthetic process"/>
    <property type="evidence" value="ECO:0000250"/>
    <property type="project" value="UniProtKB"/>
</dbReference>
<dbReference type="GO" id="GO:2001295">
    <property type="term" value="P:malonyl-CoA biosynthetic process"/>
    <property type="evidence" value="ECO:0007669"/>
    <property type="project" value="UniProtKB-UniPathway"/>
</dbReference>
<dbReference type="GO" id="GO:0051289">
    <property type="term" value="P:protein homotetramerization"/>
    <property type="evidence" value="ECO:0000250"/>
    <property type="project" value="UniProtKB"/>
</dbReference>
<dbReference type="CDD" id="cd06850">
    <property type="entry name" value="biotinyl_domain"/>
    <property type="match status" value="1"/>
</dbReference>
<dbReference type="FunFam" id="2.40.460.10:FF:000001">
    <property type="entry name" value="Acetyl-CoA carboxylase 1"/>
    <property type="match status" value="1"/>
</dbReference>
<dbReference type="FunFam" id="2.40.50.100:FF:000005">
    <property type="entry name" value="Acetyl-CoA carboxylase 1"/>
    <property type="match status" value="1"/>
</dbReference>
<dbReference type="FunFam" id="3.30.470.20:FF:000005">
    <property type="entry name" value="Acetyl-CoA carboxylase 1"/>
    <property type="match status" value="1"/>
</dbReference>
<dbReference type="FunFam" id="3.90.1770.10:FF:000001">
    <property type="entry name" value="acetyl-CoA carboxylase 1"/>
    <property type="match status" value="1"/>
</dbReference>
<dbReference type="FunFam" id="3.30.1490.20:FF:000003">
    <property type="entry name" value="acetyl-CoA carboxylase isoform X1"/>
    <property type="match status" value="1"/>
</dbReference>
<dbReference type="FunFam" id="3.40.50.20:FF:000005">
    <property type="entry name" value="acetyl-CoA carboxylase isoform X2"/>
    <property type="match status" value="1"/>
</dbReference>
<dbReference type="FunFam" id="3.90.226.10:FF:000010">
    <property type="entry name" value="acetyl-CoA carboxylase isoform X2"/>
    <property type="match status" value="1"/>
</dbReference>
<dbReference type="Gene3D" id="2.40.50.100">
    <property type="match status" value="1"/>
</dbReference>
<dbReference type="Gene3D" id="3.40.50.20">
    <property type="match status" value="1"/>
</dbReference>
<dbReference type="Gene3D" id="3.90.226.10">
    <property type="entry name" value="2-enoyl-CoA Hydratase, Chain A, domain 1"/>
    <property type="match status" value="2"/>
</dbReference>
<dbReference type="Gene3D" id="3.30.1490.20">
    <property type="entry name" value="ATP-grasp fold, A domain"/>
    <property type="match status" value="1"/>
</dbReference>
<dbReference type="Gene3D" id="3.30.470.20">
    <property type="entry name" value="ATP-grasp fold, B domain"/>
    <property type="match status" value="1"/>
</dbReference>
<dbReference type="Gene3D" id="2.40.460.10">
    <property type="entry name" value="Biotin dependent carboxylase carboxyltransferase"/>
    <property type="match status" value="1"/>
</dbReference>
<dbReference type="Gene3D" id="3.90.1770.10">
    <property type="entry name" value="PreATP-grasp domain"/>
    <property type="match status" value="1"/>
</dbReference>
<dbReference type="InterPro" id="IPR049076">
    <property type="entry name" value="ACCA"/>
</dbReference>
<dbReference type="InterPro" id="IPR049074">
    <property type="entry name" value="ACCA_BT"/>
</dbReference>
<dbReference type="InterPro" id="IPR034733">
    <property type="entry name" value="AcCoA_carboxyl_beta"/>
</dbReference>
<dbReference type="InterPro" id="IPR013537">
    <property type="entry name" value="AcCoA_COase_cen"/>
</dbReference>
<dbReference type="InterPro" id="IPR011761">
    <property type="entry name" value="ATP-grasp"/>
</dbReference>
<dbReference type="InterPro" id="IPR013815">
    <property type="entry name" value="ATP_grasp_subdomain_1"/>
</dbReference>
<dbReference type="InterPro" id="IPR005481">
    <property type="entry name" value="BC-like_N"/>
</dbReference>
<dbReference type="InterPro" id="IPR001882">
    <property type="entry name" value="Biotin_BS"/>
</dbReference>
<dbReference type="InterPro" id="IPR011764">
    <property type="entry name" value="Biotin_carboxylation_dom"/>
</dbReference>
<dbReference type="InterPro" id="IPR005482">
    <property type="entry name" value="Biotin_COase_C"/>
</dbReference>
<dbReference type="InterPro" id="IPR000089">
    <property type="entry name" value="Biotin_lipoyl"/>
</dbReference>
<dbReference type="InterPro" id="IPR005479">
    <property type="entry name" value="CbamoylP_synth_lsu-like_ATP-bd"/>
</dbReference>
<dbReference type="InterPro" id="IPR029045">
    <property type="entry name" value="ClpP/crotonase-like_dom_sf"/>
</dbReference>
<dbReference type="InterPro" id="IPR011763">
    <property type="entry name" value="COA_CT_C"/>
</dbReference>
<dbReference type="InterPro" id="IPR011762">
    <property type="entry name" value="COA_CT_N"/>
</dbReference>
<dbReference type="InterPro" id="IPR016185">
    <property type="entry name" value="PreATP-grasp_dom_sf"/>
</dbReference>
<dbReference type="InterPro" id="IPR011054">
    <property type="entry name" value="Rudment_hybrid_motif"/>
</dbReference>
<dbReference type="InterPro" id="IPR011053">
    <property type="entry name" value="Single_hybrid_motif"/>
</dbReference>
<dbReference type="PANTHER" id="PTHR45728:SF5">
    <property type="entry name" value="ACETYL-COA CARBOXYLASE 1"/>
    <property type="match status" value="1"/>
</dbReference>
<dbReference type="PANTHER" id="PTHR45728">
    <property type="entry name" value="ACETYL-COA CARBOXYLASE, ISOFORM A"/>
    <property type="match status" value="1"/>
</dbReference>
<dbReference type="Pfam" id="PF08326">
    <property type="entry name" value="ACC_central"/>
    <property type="match status" value="1"/>
</dbReference>
<dbReference type="Pfam" id="PF21385">
    <property type="entry name" value="ACCA_BT"/>
    <property type="match status" value="1"/>
</dbReference>
<dbReference type="Pfam" id="PF02785">
    <property type="entry name" value="Biotin_carb_C"/>
    <property type="match status" value="1"/>
</dbReference>
<dbReference type="Pfam" id="PF00289">
    <property type="entry name" value="Biotin_carb_N"/>
    <property type="match status" value="1"/>
</dbReference>
<dbReference type="Pfam" id="PF00364">
    <property type="entry name" value="Biotin_lipoyl"/>
    <property type="match status" value="1"/>
</dbReference>
<dbReference type="Pfam" id="PF01039">
    <property type="entry name" value="Carboxyl_trans"/>
    <property type="match status" value="1"/>
</dbReference>
<dbReference type="Pfam" id="PF02786">
    <property type="entry name" value="CPSase_L_D2"/>
    <property type="match status" value="1"/>
</dbReference>
<dbReference type="SMART" id="SM00878">
    <property type="entry name" value="Biotin_carb_C"/>
    <property type="match status" value="1"/>
</dbReference>
<dbReference type="SUPFAM" id="SSF52096">
    <property type="entry name" value="ClpP/crotonase"/>
    <property type="match status" value="2"/>
</dbReference>
<dbReference type="SUPFAM" id="SSF56059">
    <property type="entry name" value="Glutathione synthetase ATP-binding domain-like"/>
    <property type="match status" value="1"/>
</dbReference>
<dbReference type="SUPFAM" id="SSF52440">
    <property type="entry name" value="PreATP-grasp domain"/>
    <property type="match status" value="1"/>
</dbReference>
<dbReference type="SUPFAM" id="SSF51246">
    <property type="entry name" value="Rudiment single hybrid motif"/>
    <property type="match status" value="1"/>
</dbReference>
<dbReference type="SUPFAM" id="SSF51230">
    <property type="entry name" value="Single hybrid motif"/>
    <property type="match status" value="1"/>
</dbReference>
<dbReference type="PROSITE" id="PS50975">
    <property type="entry name" value="ATP_GRASP"/>
    <property type="match status" value="1"/>
</dbReference>
<dbReference type="PROSITE" id="PS50979">
    <property type="entry name" value="BC"/>
    <property type="match status" value="1"/>
</dbReference>
<dbReference type="PROSITE" id="PS00188">
    <property type="entry name" value="BIOTIN"/>
    <property type="match status" value="1"/>
</dbReference>
<dbReference type="PROSITE" id="PS50968">
    <property type="entry name" value="BIOTINYL_LIPOYL"/>
    <property type="match status" value="1"/>
</dbReference>
<dbReference type="PROSITE" id="PS50989">
    <property type="entry name" value="COA_CT_CTER"/>
    <property type="match status" value="1"/>
</dbReference>
<dbReference type="PROSITE" id="PS50980">
    <property type="entry name" value="COA_CT_NTER"/>
    <property type="match status" value="1"/>
</dbReference>
<dbReference type="PROSITE" id="PS00866">
    <property type="entry name" value="CPSASE_1"/>
    <property type="match status" value="1"/>
</dbReference>
<dbReference type="PROSITE" id="PS00867">
    <property type="entry name" value="CPSASE_2"/>
    <property type="match status" value="1"/>
</dbReference>
<proteinExistence type="evidence at transcript level"/>
<organism>
    <name type="scientific">Bos taurus</name>
    <name type="common">Bovine</name>
    <dbReference type="NCBI Taxonomy" id="9913"/>
    <lineage>
        <taxon>Eukaryota</taxon>
        <taxon>Metazoa</taxon>
        <taxon>Chordata</taxon>
        <taxon>Craniata</taxon>
        <taxon>Vertebrata</taxon>
        <taxon>Euteleostomi</taxon>
        <taxon>Mammalia</taxon>
        <taxon>Eutheria</taxon>
        <taxon>Laurasiatheria</taxon>
        <taxon>Artiodactyla</taxon>
        <taxon>Ruminantia</taxon>
        <taxon>Pecora</taxon>
        <taxon>Bovidae</taxon>
        <taxon>Bovinae</taxon>
        <taxon>Bos</taxon>
    </lineage>
</organism>